<dbReference type="EMBL" id="CP000361">
    <property type="protein sequence ID" value="ABV66530.1"/>
    <property type="molecule type" value="Genomic_DNA"/>
</dbReference>
<dbReference type="RefSeq" id="WP_012012116.1">
    <property type="nucleotide sequence ID" value="NC_009850.1"/>
</dbReference>
<dbReference type="SMR" id="A8ERF6"/>
<dbReference type="STRING" id="367737.Abu_0255"/>
<dbReference type="GeneID" id="24303363"/>
<dbReference type="KEGG" id="abu:Abu_0255"/>
<dbReference type="eggNOG" id="COG0792">
    <property type="taxonomic scope" value="Bacteria"/>
</dbReference>
<dbReference type="HOGENOM" id="CLU_115353_3_2_7"/>
<dbReference type="Proteomes" id="UP000001136">
    <property type="component" value="Chromosome"/>
</dbReference>
<dbReference type="GO" id="GO:0003676">
    <property type="term" value="F:nucleic acid binding"/>
    <property type="evidence" value="ECO:0007669"/>
    <property type="project" value="InterPro"/>
</dbReference>
<dbReference type="Gene3D" id="3.40.1350.10">
    <property type="match status" value="1"/>
</dbReference>
<dbReference type="HAMAP" id="MF_00048">
    <property type="entry name" value="UPF0102"/>
    <property type="match status" value="1"/>
</dbReference>
<dbReference type="InterPro" id="IPR011335">
    <property type="entry name" value="Restrct_endonuc-II-like"/>
</dbReference>
<dbReference type="InterPro" id="IPR011856">
    <property type="entry name" value="tRNA_endonuc-like_dom_sf"/>
</dbReference>
<dbReference type="InterPro" id="IPR003509">
    <property type="entry name" value="UPF0102_YraN-like"/>
</dbReference>
<dbReference type="NCBIfam" id="NF009152">
    <property type="entry name" value="PRK12497.2-4"/>
    <property type="match status" value="1"/>
</dbReference>
<dbReference type="PANTHER" id="PTHR34039">
    <property type="entry name" value="UPF0102 PROTEIN YRAN"/>
    <property type="match status" value="1"/>
</dbReference>
<dbReference type="PANTHER" id="PTHR34039:SF1">
    <property type="entry name" value="UPF0102 PROTEIN YRAN"/>
    <property type="match status" value="1"/>
</dbReference>
<dbReference type="Pfam" id="PF02021">
    <property type="entry name" value="UPF0102"/>
    <property type="match status" value="1"/>
</dbReference>
<dbReference type="SUPFAM" id="SSF52980">
    <property type="entry name" value="Restriction endonuclease-like"/>
    <property type="match status" value="1"/>
</dbReference>
<proteinExistence type="inferred from homology"/>
<keyword id="KW-1185">Reference proteome</keyword>
<organism>
    <name type="scientific">Aliarcobacter butzleri (strain RM4018)</name>
    <name type="common">Arcobacter butzleri</name>
    <dbReference type="NCBI Taxonomy" id="367737"/>
    <lineage>
        <taxon>Bacteria</taxon>
        <taxon>Pseudomonadati</taxon>
        <taxon>Campylobacterota</taxon>
        <taxon>Epsilonproteobacteria</taxon>
        <taxon>Campylobacterales</taxon>
        <taxon>Arcobacteraceae</taxon>
        <taxon>Aliarcobacter</taxon>
    </lineage>
</organism>
<feature type="chain" id="PRO_0000336122" description="UPF0102 protein Abu_0255">
    <location>
        <begin position="1"/>
        <end position="110"/>
    </location>
</feature>
<evidence type="ECO:0000255" key="1">
    <source>
        <dbReference type="HAMAP-Rule" id="MF_00048"/>
    </source>
</evidence>
<sequence>MSKEKGDIAEKKAISFLEKSNFEIVEKNFYAKKLGEIDIIAQRNKIYHFIEVKSANDYETAINNITSQKLSKIKRSVDFYIQKNNLNISYSIDVIIVVDDKIELLENITM</sequence>
<gene>
    <name type="ordered locus">Abu_0255</name>
</gene>
<accession>A8ERF6</accession>
<protein>
    <recommendedName>
        <fullName evidence="1">UPF0102 protein Abu_0255</fullName>
    </recommendedName>
</protein>
<reference key="1">
    <citation type="journal article" date="2007" name="PLoS ONE">
        <title>The complete genome sequence and analysis of the Epsilonproteobacterium Arcobacter butzleri.</title>
        <authorList>
            <person name="Miller W.G."/>
            <person name="Parker C.T."/>
            <person name="Rubenfield M."/>
            <person name="Mendz G.L."/>
            <person name="Woesten M.M.S.M."/>
            <person name="Ussery D.W."/>
            <person name="Stolz J.F."/>
            <person name="Binnewies T.T."/>
            <person name="Hallin P.F."/>
            <person name="Wang G."/>
            <person name="Malek J.A."/>
            <person name="Rogosin A."/>
            <person name="Stanker L.H."/>
            <person name="Mandrell R.E."/>
        </authorList>
    </citation>
    <scope>NUCLEOTIDE SEQUENCE [LARGE SCALE GENOMIC DNA]</scope>
    <source>
        <strain>RM4018</strain>
    </source>
</reference>
<name>Y255_ALIB4</name>
<comment type="similarity">
    <text evidence="1">Belongs to the UPF0102 family.</text>
</comment>